<accession>B4TKU2</accession>
<proteinExistence type="inferred from homology"/>
<gene>
    <name evidence="1" type="primary">malT</name>
    <name type="ordered locus">SeHA_C3823</name>
</gene>
<name>MALT_SALHS</name>
<protein>
    <recommendedName>
        <fullName evidence="1">HTH-type transcriptional regulator MalT</fullName>
    </recommendedName>
    <alternativeName>
        <fullName evidence="1">ATP-dependent transcriptional activator MalT</fullName>
    </alternativeName>
</protein>
<reference key="1">
    <citation type="journal article" date="2011" name="J. Bacteriol.">
        <title>Comparative genomics of 28 Salmonella enterica isolates: evidence for CRISPR-mediated adaptive sublineage evolution.</title>
        <authorList>
            <person name="Fricke W.F."/>
            <person name="Mammel M.K."/>
            <person name="McDermott P.F."/>
            <person name="Tartera C."/>
            <person name="White D.G."/>
            <person name="Leclerc J.E."/>
            <person name="Ravel J."/>
            <person name="Cebula T.A."/>
        </authorList>
    </citation>
    <scope>NUCLEOTIDE SEQUENCE [LARGE SCALE GENOMIC DNA]</scope>
    <source>
        <strain>SL476</strain>
    </source>
</reference>
<comment type="function">
    <text evidence="1">Positively regulates the transcription of the maltose regulon whose gene products are responsible for uptake and catabolism of malto-oligosaccharides. Specifically binds to the promoter region of its target genes, recognizing a short DNA motif called the MalT box.</text>
</comment>
<comment type="activity regulation">
    <text evidence="1">Activated by ATP and maltotriose, which are both required for DNA binding.</text>
</comment>
<comment type="subunit">
    <text evidence="1">Monomer in solution. Oligomerizes to an active state in the presence of the positive effectors ATP and maltotriose.</text>
</comment>
<comment type="similarity">
    <text evidence="1">Belongs to the MalT family.</text>
</comment>
<organism>
    <name type="scientific">Salmonella heidelberg (strain SL476)</name>
    <dbReference type="NCBI Taxonomy" id="454169"/>
    <lineage>
        <taxon>Bacteria</taxon>
        <taxon>Pseudomonadati</taxon>
        <taxon>Pseudomonadota</taxon>
        <taxon>Gammaproteobacteria</taxon>
        <taxon>Enterobacterales</taxon>
        <taxon>Enterobacteriaceae</taxon>
        <taxon>Salmonella</taxon>
    </lineage>
</organism>
<feature type="chain" id="PRO_1000139857" description="HTH-type transcriptional regulator MalT">
    <location>
        <begin position="1"/>
        <end position="901"/>
    </location>
</feature>
<feature type="domain" description="HTH luxR-type" evidence="1">
    <location>
        <begin position="829"/>
        <end position="894"/>
    </location>
</feature>
<feature type="DNA-binding region" description="H-T-H motif" evidence="1">
    <location>
        <begin position="853"/>
        <end position="872"/>
    </location>
</feature>
<feature type="binding site" evidence="1">
    <location>
        <begin position="39"/>
        <end position="46"/>
    </location>
    <ligand>
        <name>ATP</name>
        <dbReference type="ChEBI" id="CHEBI:30616"/>
    </ligand>
</feature>
<sequence length="901" mass="103032">MLIPSKLSRPVRLDHTVVRERLLAKLSGANNFRLALVTSPAGYGKTTLVSQWAAGKNELGWYSLDEGDNQQERFASYLIAAIQQATGGHCSTSEAMAQKRQYASLTSLFAQLFIELAQWHRPLYLVIDDYHLITNPVIHDAMRFFLRHQPENFTLVVLSRNLPQLGIANLRVRDQLLEIGSQQLAFNHQEAKQFFDRRLSSPIEASESSRMCDDVAGWATALQLIALSARQNHTSAHHSARRLAGINASHLSDYLVDEVLDNVDVSTRHFLLKSAILRSMNDALIVRVTGEENGQMRLEEIERQGLFLQRMDDTGEWFSYHPLFGSFLRQRCQWELAAELPEIHRAAAESWMEQGFPSEAIHHALAAGDAQMLRDILLNHAWGLFNHSELALLEESLKALPWESLLENPRLVLLQAWLMQSQHRYSEVNTLLARAEQEIKGVMDGTLHAEFNALRAQVAINDGNPEEAERLAKLALDELPLAWFYSRIVATSVHGEVLHCKGDLSQSLSLMQQTEQMARHHDVWHYALWSLIQQSEIQFAQGFLQAAWETQERAFQLIKEQHLEQLPMHEFLVRIRAQLLWAWARLDEAEASARSGIAVLSTFQPQQQLQCLTLLVQCSLARGDLDNARSQLNRLENLLGNGRYHCDWISNADKVRVIYWQLTGDKKSAANWLRHTPKPAFANNHFLQGQWRNIARAQILLGEFEPAEIVLEELNENARSLRLMSDLNRNLLLLNQLYWQSGRKNDAQRVLLDALQLANRTGFISHFVIEGEAMAQQLRQLIQLNTLPEMEQHRAQRILREINQHHRHKFAHFDEGFVERLLNHPDVPELIRTSPLTQREWQVLGLIYSGYSNEQIAGELAVAATTIKTHIRNLYQKLGVAHRQDAVQHAQQLLKMMGYGV</sequence>
<keyword id="KW-0010">Activator</keyword>
<keyword id="KW-0067">ATP-binding</keyword>
<keyword id="KW-0119">Carbohydrate metabolism</keyword>
<keyword id="KW-0238">DNA-binding</keyword>
<keyword id="KW-0547">Nucleotide-binding</keyword>
<keyword id="KW-0804">Transcription</keyword>
<keyword id="KW-0805">Transcription regulation</keyword>
<dbReference type="EMBL" id="CP001120">
    <property type="protein sequence ID" value="ACF67585.1"/>
    <property type="molecule type" value="Genomic_DNA"/>
</dbReference>
<dbReference type="RefSeq" id="WP_000907043.1">
    <property type="nucleotide sequence ID" value="NC_011083.1"/>
</dbReference>
<dbReference type="SMR" id="B4TKU2"/>
<dbReference type="KEGG" id="seh:SeHA_C3823"/>
<dbReference type="HOGENOM" id="CLU_006325_3_0_6"/>
<dbReference type="Proteomes" id="UP000001866">
    <property type="component" value="Chromosome"/>
</dbReference>
<dbReference type="GO" id="GO:0005524">
    <property type="term" value="F:ATP binding"/>
    <property type="evidence" value="ECO:0007669"/>
    <property type="project" value="UniProtKB-UniRule"/>
</dbReference>
<dbReference type="GO" id="GO:0003677">
    <property type="term" value="F:DNA binding"/>
    <property type="evidence" value="ECO:0007669"/>
    <property type="project" value="UniProtKB-KW"/>
</dbReference>
<dbReference type="GO" id="GO:0003700">
    <property type="term" value="F:DNA-binding transcription factor activity"/>
    <property type="evidence" value="ECO:0007669"/>
    <property type="project" value="UniProtKB-UniRule"/>
</dbReference>
<dbReference type="GO" id="GO:0045913">
    <property type="term" value="P:positive regulation of carbohydrate metabolic process"/>
    <property type="evidence" value="ECO:0007669"/>
    <property type="project" value="UniProtKB-UniRule"/>
</dbReference>
<dbReference type="GO" id="GO:0045893">
    <property type="term" value="P:positive regulation of DNA-templated transcription"/>
    <property type="evidence" value="ECO:0007669"/>
    <property type="project" value="UniProtKB-UniRule"/>
</dbReference>
<dbReference type="CDD" id="cd06170">
    <property type="entry name" value="LuxR_C_like"/>
    <property type="match status" value="1"/>
</dbReference>
<dbReference type="FunFam" id="1.10.10.10:FF:000115">
    <property type="entry name" value="HTH-type transcriptional regulator MalT"/>
    <property type="match status" value="1"/>
</dbReference>
<dbReference type="Gene3D" id="1.25.40.10">
    <property type="entry name" value="Tetratricopeptide repeat domain"/>
    <property type="match status" value="1"/>
</dbReference>
<dbReference type="Gene3D" id="1.10.10.10">
    <property type="entry name" value="Winged helix-like DNA-binding domain superfamily/Winged helix DNA-binding domain"/>
    <property type="match status" value="1"/>
</dbReference>
<dbReference type="HAMAP" id="MF_01247">
    <property type="entry name" value="HTH_type_MalT"/>
    <property type="match status" value="1"/>
</dbReference>
<dbReference type="InterPro" id="IPR027417">
    <property type="entry name" value="P-loop_NTPase"/>
</dbReference>
<dbReference type="InterPro" id="IPR016032">
    <property type="entry name" value="Sig_transdc_resp-reg_C-effctor"/>
</dbReference>
<dbReference type="InterPro" id="IPR011990">
    <property type="entry name" value="TPR-like_helical_dom_sf"/>
</dbReference>
<dbReference type="InterPro" id="IPR041617">
    <property type="entry name" value="TPR_MalT"/>
</dbReference>
<dbReference type="InterPro" id="IPR023768">
    <property type="entry name" value="Tscrpt_reg_HTH_MalT"/>
</dbReference>
<dbReference type="InterPro" id="IPR000792">
    <property type="entry name" value="Tscrpt_reg_LuxR_C"/>
</dbReference>
<dbReference type="InterPro" id="IPR036388">
    <property type="entry name" value="WH-like_DNA-bd_sf"/>
</dbReference>
<dbReference type="NCBIfam" id="NF003420">
    <property type="entry name" value="PRK04841.1"/>
    <property type="match status" value="1"/>
</dbReference>
<dbReference type="PANTHER" id="PTHR44688">
    <property type="entry name" value="DNA-BINDING TRANSCRIPTIONAL ACTIVATOR DEVR_DOSR"/>
    <property type="match status" value="1"/>
</dbReference>
<dbReference type="PANTHER" id="PTHR44688:SF16">
    <property type="entry name" value="DNA-BINDING TRANSCRIPTIONAL ACTIVATOR DEVR_DOSR"/>
    <property type="match status" value="1"/>
</dbReference>
<dbReference type="Pfam" id="PF00196">
    <property type="entry name" value="GerE"/>
    <property type="match status" value="1"/>
</dbReference>
<dbReference type="Pfam" id="PF17874">
    <property type="entry name" value="TPR_MalT"/>
    <property type="match status" value="1"/>
</dbReference>
<dbReference type="PRINTS" id="PR00038">
    <property type="entry name" value="HTHLUXR"/>
</dbReference>
<dbReference type="SMART" id="SM00421">
    <property type="entry name" value="HTH_LUXR"/>
    <property type="match status" value="1"/>
</dbReference>
<dbReference type="SUPFAM" id="SSF46894">
    <property type="entry name" value="C-terminal effector domain of the bipartite response regulators"/>
    <property type="match status" value="1"/>
</dbReference>
<dbReference type="SUPFAM" id="SSF52540">
    <property type="entry name" value="P-loop containing nucleoside triphosphate hydrolases"/>
    <property type="match status" value="1"/>
</dbReference>
<dbReference type="SUPFAM" id="SSF48452">
    <property type="entry name" value="TPR-like"/>
    <property type="match status" value="1"/>
</dbReference>
<dbReference type="PROSITE" id="PS00622">
    <property type="entry name" value="HTH_LUXR_1"/>
    <property type="match status" value="1"/>
</dbReference>
<dbReference type="PROSITE" id="PS50043">
    <property type="entry name" value="HTH_LUXR_2"/>
    <property type="match status" value="1"/>
</dbReference>
<evidence type="ECO:0000255" key="1">
    <source>
        <dbReference type="HAMAP-Rule" id="MF_01247"/>
    </source>
</evidence>